<keyword id="KW-1185">Reference proteome</keyword>
<keyword id="KW-0687">Ribonucleoprotein</keyword>
<keyword id="KW-0689">Ribosomal protein</keyword>
<keyword id="KW-0694">RNA-binding</keyword>
<keyword id="KW-0699">rRNA-binding</keyword>
<dbReference type="EMBL" id="CP000144">
    <property type="protein sequence ID" value="ABA80602.1"/>
    <property type="molecule type" value="Genomic_DNA"/>
</dbReference>
<dbReference type="RefSeq" id="WP_002723380.1">
    <property type="nucleotide sequence ID" value="NZ_CP030272.1"/>
</dbReference>
<dbReference type="RefSeq" id="YP_354503.1">
    <property type="nucleotide sequence ID" value="NC_007494.2"/>
</dbReference>
<dbReference type="SMR" id="Q3IXY2"/>
<dbReference type="STRING" id="272943.RSP_3819"/>
<dbReference type="EnsemblBacteria" id="ABA80602">
    <property type="protein sequence ID" value="ABA80602"/>
    <property type="gene ID" value="RSP_3819"/>
</dbReference>
<dbReference type="GeneID" id="67448500"/>
<dbReference type="KEGG" id="rsp:RSP_3819"/>
<dbReference type="PATRIC" id="fig|272943.9.peg.3405"/>
<dbReference type="eggNOG" id="COG0261">
    <property type="taxonomic scope" value="Bacteria"/>
</dbReference>
<dbReference type="OrthoDB" id="9813334at2"/>
<dbReference type="PhylomeDB" id="Q3IXY2"/>
<dbReference type="Proteomes" id="UP000002703">
    <property type="component" value="Chromosome 2"/>
</dbReference>
<dbReference type="GO" id="GO:0005737">
    <property type="term" value="C:cytoplasm"/>
    <property type="evidence" value="ECO:0007669"/>
    <property type="project" value="UniProtKB-ARBA"/>
</dbReference>
<dbReference type="GO" id="GO:1990904">
    <property type="term" value="C:ribonucleoprotein complex"/>
    <property type="evidence" value="ECO:0007669"/>
    <property type="project" value="UniProtKB-KW"/>
</dbReference>
<dbReference type="GO" id="GO:0005840">
    <property type="term" value="C:ribosome"/>
    <property type="evidence" value="ECO:0007669"/>
    <property type="project" value="UniProtKB-KW"/>
</dbReference>
<dbReference type="GO" id="GO:0019843">
    <property type="term" value="F:rRNA binding"/>
    <property type="evidence" value="ECO:0007669"/>
    <property type="project" value="UniProtKB-UniRule"/>
</dbReference>
<dbReference type="GO" id="GO:0003735">
    <property type="term" value="F:structural constituent of ribosome"/>
    <property type="evidence" value="ECO:0007669"/>
    <property type="project" value="InterPro"/>
</dbReference>
<dbReference type="GO" id="GO:0006412">
    <property type="term" value="P:translation"/>
    <property type="evidence" value="ECO:0007669"/>
    <property type="project" value="UniProtKB-UniRule"/>
</dbReference>
<dbReference type="HAMAP" id="MF_01363">
    <property type="entry name" value="Ribosomal_bL21"/>
    <property type="match status" value="1"/>
</dbReference>
<dbReference type="InterPro" id="IPR028909">
    <property type="entry name" value="bL21-like"/>
</dbReference>
<dbReference type="InterPro" id="IPR036164">
    <property type="entry name" value="bL21-like_sf"/>
</dbReference>
<dbReference type="InterPro" id="IPR001787">
    <property type="entry name" value="Ribosomal_bL21"/>
</dbReference>
<dbReference type="NCBIfam" id="TIGR00061">
    <property type="entry name" value="L21"/>
    <property type="match status" value="1"/>
</dbReference>
<dbReference type="PANTHER" id="PTHR21349">
    <property type="entry name" value="50S RIBOSOMAL PROTEIN L21"/>
    <property type="match status" value="1"/>
</dbReference>
<dbReference type="PANTHER" id="PTHR21349:SF0">
    <property type="entry name" value="LARGE RIBOSOMAL SUBUNIT PROTEIN BL21M"/>
    <property type="match status" value="1"/>
</dbReference>
<dbReference type="Pfam" id="PF00829">
    <property type="entry name" value="Ribosomal_L21p"/>
    <property type="match status" value="1"/>
</dbReference>
<dbReference type="SUPFAM" id="SSF141091">
    <property type="entry name" value="L21p-like"/>
    <property type="match status" value="1"/>
</dbReference>
<sequence>MFAVLKTGGKQYKVQAGDVLRVEKLACEAGDKIQFNDILMVGGDSVTVGAPFVAGAAVQAEVIAQIKGEKTIHYVKRRRKHSSQRTKGHRQQLTLLRVTDVLASGADASGVAVATGTADARRAAHNASAKE</sequence>
<name>RL21_CERS4</name>
<comment type="function">
    <text evidence="1">This protein binds to 23S rRNA in the presence of protein L20.</text>
</comment>
<comment type="subunit">
    <text evidence="1">Part of the 50S ribosomal subunit. Contacts protein L20.</text>
</comment>
<comment type="similarity">
    <text evidence="1">Belongs to the bacterial ribosomal protein bL21 family.</text>
</comment>
<feature type="chain" id="PRO_0000270720" description="Large ribosomal subunit protein bL21">
    <location>
        <begin position="1"/>
        <end position="131"/>
    </location>
</feature>
<gene>
    <name evidence="1" type="primary">rplU</name>
    <name type="ordered locus">RHOS4_30340</name>
    <name type="ORF">RSP_3819</name>
</gene>
<reference key="1">
    <citation type="submission" date="2005-09" db="EMBL/GenBank/DDBJ databases">
        <title>Complete sequence of chromosome 2 of Rhodobacter sphaeroides 2.4.1.</title>
        <authorList>
            <person name="Copeland A."/>
            <person name="Lucas S."/>
            <person name="Lapidus A."/>
            <person name="Barry K."/>
            <person name="Detter J.C."/>
            <person name="Glavina T."/>
            <person name="Hammon N."/>
            <person name="Israni S."/>
            <person name="Pitluck S."/>
            <person name="Richardson P."/>
            <person name="Mackenzie C."/>
            <person name="Choudhary M."/>
            <person name="Larimer F."/>
            <person name="Hauser L.J."/>
            <person name="Land M."/>
            <person name="Donohue T.J."/>
            <person name="Kaplan S."/>
        </authorList>
    </citation>
    <scope>NUCLEOTIDE SEQUENCE [LARGE SCALE GENOMIC DNA]</scope>
    <source>
        <strain>ATCC 17023 / DSM 158 / JCM 6121 / CCUG 31486 / LMG 2827 / NBRC 12203 / NCIMB 8253 / ATH 2.4.1.</strain>
    </source>
</reference>
<accession>Q3IXY2</accession>
<evidence type="ECO:0000255" key="1">
    <source>
        <dbReference type="HAMAP-Rule" id="MF_01363"/>
    </source>
</evidence>
<evidence type="ECO:0000305" key="2"/>
<organism>
    <name type="scientific">Cereibacter sphaeroides (strain ATCC 17023 / DSM 158 / JCM 6121 / CCUG 31486 / LMG 2827 / NBRC 12203 / NCIMB 8253 / ATH 2.4.1.)</name>
    <name type="common">Rhodobacter sphaeroides</name>
    <dbReference type="NCBI Taxonomy" id="272943"/>
    <lineage>
        <taxon>Bacteria</taxon>
        <taxon>Pseudomonadati</taxon>
        <taxon>Pseudomonadota</taxon>
        <taxon>Alphaproteobacteria</taxon>
        <taxon>Rhodobacterales</taxon>
        <taxon>Paracoccaceae</taxon>
        <taxon>Cereibacter</taxon>
    </lineage>
</organism>
<protein>
    <recommendedName>
        <fullName evidence="1">Large ribosomal subunit protein bL21</fullName>
    </recommendedName>
    <alternativeName>
        <fullName evidence="2">50S ribosomal protein L21</fullName>
    </alternativeName>
</protein>
<proteinExistence type="inferred from homology"/>